<comment type="function">
    <text evidence="5">Mannan endo-1,4-beta-mannosidase that exhibits high activity against konjac glucomannan and carob galactomannan, as well as a lower activity toward beta-mannan (PubMed:27193267). Shows no activity against barley beta-glucan, birchwood xylan, and low viscosity carboxymethyl cellulose (CMC) (PubMed:27193267). Has the ability to hydrolyze manno-oligosaccharides such as M4 which is degraded slightly to M3 and M1, M5 which is mainly degraded to M4 and M1, and M6 which is mostly hydrolyzed to M4 and M2 (PubMed:27193267). Shows no activity toward M2 and M3 manno-oligosaccharides (PubMed:27193267).</text>
</comment>
<comment type="activity regulation">
    <text evidence="5">The activity is completely impaired by Ag(+), partially inhibited by Zn(2+), and enhanced by Co(2+), Ni(2+) and Cu(2+) by 22.6, 14.5 and 20.8 %, respectively (PubMed:27193267). Ca(2+), Na(+), Mg(2+), Mn(2+), urea and EDTA do not significantly affect the mannanase activity (PubMed:27193267).</text>
</comment>
<comment type="biophysicochemical properties">
    <kinetics>
        <KM evidence="5">2.22 mg/ml for carob galactomannan</KM>
        <KM evidence="5">3.22 mg/ml for konjac glucomannan</KM>
        <Vmax evidence="5">296.8 umol/min/mg enzyme toward carob galactomannan</Vmax>
        <Vmax evidence="5">475.2 umol/min/mg enzyme toward konjac glucomannan</Vmax>
    </kinetics>
    <phDependence>
        <text evidence="5">Optimum pH is 6.0.</text>
    </phDependence>
    <temperatureDependence>
        <text evidence="5">Optimum temperature is 60 degrees Celsius.</text>
    </temperatureDependence>
</comment>
<comment type="subcellular location">
    <subcellularLocation>
        <location evidence="8">Secreted</location>
    </subcellularLocation>
</comment>
<comment type="biotechnology">
    <text evidence="5">The addition of Man26A as a supplement to the commercial enzyme mixture Celluclast(R) 1.5 L and Novozyme(R) 188 results in enhanced enzymatic hydrolysis of pretreated beechwood sawdust, improving the release of total reducing sugars and glucose by 13 and 12 %, respectively.</text>
</comment>
<comment type="similarity">
    <text evidence="7">Belongs to the glycosyl hydrolase 26 family.</text>
</comment>
<dbReference type="EC" id="3.2.1.-" evidence="5"/>
<dbReference type="EMBL" id="CP003002">
    <property type="protein sequence ID" value="AEO53670.1"/>
    <property type="molecule type" value="Genomic_DNA"/>
</dbReference>
<dbReference type="RefSeq" id="XP_003658915.1">
    <property type="nucleotide sequence ID" value="XM_003658867.1"/>
</dbReference>
<dbReference type="SMR" id="G2Q4H7"/>
<dbReference type="STRING" id="573729.G2Q4H7"/>
<dbReference type="GlyCosmos" id="G2Q4H7">
    <property type="glycosylation" value="2 sites, No reported glycans"/>
</dbReference>
<dbReference type="GeneID" id="11508627"/>
<dbReference type="KEGG" id="mtm:MYCTH_99077"/>
<dbReference type="VEuPathDB" id="FungiDB:MYCTH_99077"/>
<dbReference type="eggNOG" id="ENOG502QT55">
    <property type="taxonomic scope" value="Eukaryota"/>
</dbReference>
<dbReference type="HOGENOM" id="CLU_016930_1_1_1"/>
<dbReference type="InParanoid" id="G2Q4H7"/>
<dbReference type="OMA" id="WSGFYTR"/>
<dbReference type="OrthoDB" id="5286354at2759"/>
<dbReference type="BRENDA" id="3.2.1.78">
    <property type="organism ID" value="13804"/>
</dbReference>
<dbReference type="Proteomes" id="UP000007322">
    <property type="component" value="Chromosome 1"/>
</dbReference>
<dbReference type="GO" id="GO:0005576">
    <property type="term" value="C:extracellular region"/>
    <property type="evidence" value="ECO:0007669"/>
    <property type="project" value="UniProtKB-SubCell"/>
</dbReference>
<dbReference type="GO" id="GO:0030246">
    <property type="term" value="F:carbohydrate binding"/>
    <property type="evidence" value="ECO:0007669"/>
    <property type="project" value="InterPro"/>
</dbReference>
<dbReference type="GO" id="GO:0016985">
    <property type="term" value="F:mannan endo-1,4-beta-mannosidase activity"/>
    <property type="evidence" value="ECO:0007669"/>
    <property type="project" value="InterPro"/>
</dbReference>
<dbReference type="GO" id="GO:0006080">
    <property type="term" value="P:substituted mannan metabolic process"/>
    <property type="evidence" value="ECO:0007669"/>
    <property type="project" value="InterPro"/>
</dbReference>
<dbReference type="CDD" id="cd04086">
    <property type="entry name" value="CBM35_mannanase-like"/>
    <property type="match status" value="1"/>
</dbReference>
<dbReference type="Gene3D" id="2.60.120.260">
    <property type="entry name" value="Galactose-binding domain-like"/>
    <property type="match status" value="1"/>
</dbReference>
<dbReference type="Gene3D" id="3.20.20.80">
    <property type="entry name" value="Glycosidases"/>
    <property type="match status" value="1"/>
</dbReference>
<dbReference type="InterPro" id="IPR005084">
    <property type="entry name" value="CBM6"/>
</dbReference>
<dbReference type="InterPro" id="IPR008979">
    <property type="entry name" value="Galactose-bd-like_sf"/>
</dbReference>
<dbReference type="InterPro" id="IPR022790">
    <property type="entry name" value="GH26_dom"/>
</dbReference>
<dbReference type="InterPro" id="IPR000805">
    <property type="entry name" value="Glyco_hydro_26"/>
</dbReference>
<dbReference type="InterPro" id="IPR017853">
    <property type="entry name" value="Glycoside_hydrolase_SF"/>
</dbReference>
<dbReference type="PANTHER" id="PTHR40079:SF4">
    <property type="entry name" value="GH26 DOMAIN-CONTAINING PROTEIN-RELATED"/>
    <property type="match status" value="1"/>
</dbReference>
<dbReference type="PANTHER" id="PTHR40079">
    <property type="entry name" value="MANNAN ENDO-1,4-BETA-MANNOSIDASE E-RELATED"/>
    <property type="match status" value="1"/>
</dbReference>
<dbReference type="Pfam" id="PF16990">
    <property type="entry name" value="CBM_35"/>
    <property type="match status" value="1"/>
</dbReference>
<dbReference type="Pfam" id="PF02156">
    <property type="entry name" value="Glyco_hydro_26"/>
    <property type="match status" value="1"/>
</dbReference>
<dbReference type="PRINTS" id="PR00739">
    <property type="entry name" value="GLHYDRLASE26"/>
</dbReference>
<dbReference type="SUPFAM" id="SSF51445">
    <property type="entry name" value="(Trans)glycosidases"/>
    <property type="match status" value="1"/>
</dbReference>
<dbReference type="SUPFAM" id="SSF49785">
    <property type="entry name" value="Galactose-binding domain-like"/>
    <property type="match status" value="1"/>
</dbReference>
<dbReference type="PROSITE" id="PS51175">
    <property type="entry name" value="CBM6"/>
    <property type="match status" value="1"/>
</dbReference>
<dbReference type="PROSITE" id="PS51764">
    <property type="entry name" value="GH26"/>
    <property type="match status" value="1"/>
</dbReference>
<evidence type="ECO:0000255" key="1"/>
<evidence type="ECO:0000255" key="2">
    <source>
        <dbReference type="PROSITE-ProRule" id="PRU00498"/>
    </source>
</evidence>
<evidence type="ECO:0000255" key="3">
    <source>
        <dbReference type="PROSITE-ProRule" id="PRU00523"/>
    </source>
</evidence>
<evidence type="ECO:0000255" key="4">
    <source>
        <dbReference type="PROSITE-ProRule" id="PRU01100"/>
    </source>
</evidence>
<evidence type="ECO:0000269" key="5">
    <source>
    </source>
</evidence>
<evidence type="ECO:0000303" key="6">
    <source>
    </source>
</evidence>
<evidence type="ECO:0000305" key="7"/>
<evidence type="ECO:0000305" key="8">
    <source>
    </source>
</evidence>
<sequence length="482" mass="52766">MARTLRYLLCGILALAAGSNAVPAARGSTRAAPAAEPSTSATTYEAEDAILSGTTVDTAQEGYTGSGYVTGFDEASDKITFEVESEATKLYDLSIRIAAIYGDKHTTVVLNGGASSDVSFPAGDTWVDVPAGQVLLNEGANTIEIVSNWGWYLVDSITLTPSAPRPEHQINRSLNNPSADASARALYDYLRSIYGKKILAGQQDLTWADYVTQQTGKTPALVSVDLMDYSPSRVERGTKGTSVEEAITHAERGGIVSALWHWNAPAGLYDTDEHPWWSGFYTDATDFDVAAALSSTDNANYTLLLRDIDAIAVQLKRLRDARVPVLWRPLHEAEGGWFWWGAKGPDPAKQLYALLYDRLVNHHGINNLIWVWNSLSPDWYPGDDTVDILSADVYAQGNGPMSTQYNQLIDLGKDKKMIAAAEVGAAPLPDLLQAYEAHWLWFAVWGDTFINNAEWNSPEVLKTVYTSDYVLTLDEIQGWQDS</sequence>
<gene>
    <name evidence="6" type="primary">Man26A</name>
    <name type="ORF">MYCTH_99077</name>
</gene>
<name>MA26A_THET4</name>
<keyword id="KW-0325">Glycoprotein</keyword>
<keyword id="KW-0326">Glycosidase</keyword>
<keyword id="KW-0378">Hydrolase</keyword>
<keyword id="KW-1185">Reference proteome</keyword>
<keyword id="KW-0964">Secreted</keyword>
<keyword id="KW-0732">Signal</keyword>
<reference key="1">
    <citation type="journal article" date="2011" name="Nat. Biotechnol.">
        <title>Comparative genomic analysis of the thermophilic biomass-degrading fungi Myceliophthora thermophila and Thielavia terrestris.</title>
        <authorList>
            <person name="Berka R.M."/>
            <person name="Grigoriev I.V."/>
            <person name="Otillar R."/>
            <person name="Salamov A."/>
            <person name="Grimwood J."/>
            <person name="Reid I."/>
            <person name="Ishmael N."/>
            <person name="John T."/>
            <person name="Darmond C."/>
            <person name="Moisan M.-C."/>
            <person name="Henrissat B."/>
            <person name="Coutinho P.M."/>
            <person name="Lombard V."/>
            <person name="Natvig D.O."/>
            <person name="Lindquist E."/>
            <person name="Schmutz J."/>
            <person name="Lucas S."/>
            <person name="Harris P."/>
            <person name="Powlowski J."/>
            <person name="Bellemare A."/>
            <person name="Taylor D."/>
            <person name="Butler G."/>
            <person name="de Vries R.P."/>
            <person name="Allijn I.E."/>
            <person name="van den Brink J."/>
            <person name="Ushinsky S."/>
            <person name="Storms R."/>
            <person name="Powell A.J."/>
            <person name="Paulsen I.T."/>
            <person name="Elbourne L.D.H."/>
            <person name="Baker S.E."/>
            <person name="Magnuson J."/>
            <person name="LaBoissiere S."/>
            <person name="Clutterbuck A.J."/>
            <person name="Martinez D."/>
            <person name="Wogulis M."/>
            <person name="de Leon A.L."/>
            <person name="Rey M.W."/>
            <person name="Tsang A."/>
        </authorList>
    </citation>
    <scope>NUCLEOTIDE SEQUENCE [LARGE SCALE GENOMIC DNA]</scope>
    <source>
        <strain>ATCC 42464 / BCRC 31852 / DSM 1799</strain>
    </source>
</reference>
<reference key="2">
    <citation type="journal article" date="2016" name="Appl. Microbiol. Biotechnol.">
        <title>A thermostable GH26 endo-beta-mannanase from Myceliophthora thermophila capable of enhancing lignocellulose degradation.</title>
        <authorList>
            <person name="Katsimpouras C."/>
            <person name="Dimarogona M."/>
            <person name="Petropoulos P."/>
            <person name="Christakopoulos P."/>
            <person name="Topakas E."/>
        </authorList>
    </citation>
    <scope>FUNCTION</scope>
    <scope>BIOPHYSICOCHEMICAL PROPERTIES</scope>
    <scope>CATALYTIC ACTIVITY</scope>
    <scope>ACTIVITY REGULATION</scope>
    <scope>BIOTECHNOLOGY</scope>
</reference>
<feature type="signal peptide" evidence="1">
    <location>
        <begin position="1"/>
        <end position="21"/>
    </location>
</feature>
<feature type="chain" id="PRO_5003436064" description="Mannan endo-1,4-beta-mannosidase">
    <location>
        <begin position="22"/>
        <end position="482"/>
    </location>
</feature>
<feature type="domain" description="CBM6" evidence="3">
    <location>
        <begin position="42"/>
        <end position="160"/>
    </location>
</feature>
<feature type="domain" description="GH26" evidence="4">
    <location>
        <begin position="181"/>
        <end position="474"/>
    </location>
</feature>
<feature type="active site" description="Proton donor" evidence="4">
    <location>
        <position position="332"/>
    </location>
</feature>
<feature type="active site" description="Nucleophile" evidence="4">
    <location>
        <position position="422"/>
    </location>
</feature>
<feature type="glycosylation site" description="N-linked (GlcNAc...) asparagine" evidence="2">
    <location>
        <position position="171"/>
    </location>
</feature>
<feature type="glycosylation site" description="N-linked (GlcNAc...) asparagine" evidence="2">
    <location>
        <position position="300"/>
    </location>
</feature>
<protein>
    <recommendedName>
        <fullName evidence="7">Mannan endo-1,4-beta-mannosidase</fullName>
        <ecNumber evidence="5">3.2.1.-</ecNumber>
    </recommendedName>
    <alternativeName>
        <fullName evidence="7">Endo-(1,4)-beta-mannanase</fullName>
    </alternativeName>
    <alternativeName>
        <fullName evidence="6">GH26 family endo-beta-mannanase</fullName>
    </alternativeName>
</protein>
<proteinExistence type="evidence at protein level"/>
<accession>G2Q4H7</accession>
<organism>
    <name type="scientific">Thermothelomyces thermophilus (strain ATCC 42464 / BCRC 31852 / DSM 1799)</name>
    <name type="common">Sporotrichum thermophile</name>
    <dbReference type="NCBI Taxonomy" id="573729"/>
    <lineage>
        <taxon>Eukaryota</taxon>
        <taxon>Fungi</taxon>
        <taxon>Dikarya</taxon>
        <taxon>Ascomycota</taxon>
        <taxon>Pezizomycotina</taxon>
        <taxon>Sordariomycetes</taxon>
        <taxon>Sordariomycetidae</taxon>
        <taxon>Sordariales</taxon>
        <taxon>Chaetomiaceae</taxon>
        <taxon>Thermothelomyces</taxon>
    </lineage>
</organism>